<dbReference type="EMBL" id="EU085452">
    <property type="protein sequence ID" value="ABW82662.1"/>
    <property type="molecule type" value="mRNA"/>
</dbReference>
<dbReference type="SMR" id="B4XSZ0"/>
<dbReference type="GO" id="GO:0005576">
    <property type="term" value="C:extracellular region"/>
    <property type="evidence" value="ECO:0007669"/>
    <property type="project" value="UniProtKB-SubCell"/>
</dbReference>
<dbReference type="GO" id="GO:0090729">
    <property type="term" value="F:toxin activity"/>
    <property type="evidence" value="ECO:0007669"/>
    <property type="project" value="UniProtKB-KW"/>
</dbReference>
<dbReference type="FunFam" id="3.10.100.10:FF:000087">
    <property type="entry name" value="Snaclec rhodocetin subunit delta"/>
    <property type="match status" value="1"/>
</dbReference>
<dbReference type="Gene3D" id="3.10.100.10">
    <property type="entry name" value="Mannose-Binding Protein A, subunit A"/>
    <property type="match status" value="1"/>
</dbReference>
<dbReference type="InterPro" id="IPR001304">
    <property type="entry name" value="C-type_lectin-like"/>
</dbReference>
<dbReference type="InterPro" id="IPR016186">
    <property type="entry name" value="C-type_lectin-like/link_sf"/>
</dbReference>
<dbReference type="InterPro" id="IPR050111">
    <property type="entry name" value="C-type_lectin/snaclec_domain"/>
</dbReference>
<dbReference type="InterPro" id="IPR018378">
    <property type="entry name" value="C-type_lectin_CS"/>
</dbReference>
<dbReference type="InterPro" id="IPR016187">
    <property type="entry name" value="CTDL_fold"/>
</dbReference>
<dbReference type="PANTHER" id="PTHR22803">
    <property type="entry name" value="MANNOSE, PHOSPHOLIPASE, LECTIN RECEPTOR RELATED"/>
    <property type="match status" value="1"/>
</dbReference>
<dbReference type="Pfam" id="PF00059">
    <property type="entry name" value="Lectin_C"/>
    <property type="match status" value="1"/>
</dbReference>
<dbReference type="PRINTS" id="PR01504">
    <property type="entry name" value="PNCREATITSAP"/>
</dbReference>
<dbReference type="SMART" id="SM00034">
    <property type="entry name" value="CLECT"/>
    <property type="match status" value="1"/>
</dbReference>
<dbReference type="SUPFAM" id="SSF56436">
    <property type="entry name" value="C-type lectin-like"/>
    <property type="match status" value="1"/>
</dbReference>
<dbReference type="PROSITE" id="PS00615">
    <property type="entry name" value="C_TYPE_LECTIN_1"/>
    <property type="match status" value="1"/>
</dbReference>
<dbReference type="PROSITE" id="PS50041">
    <property type="entry name" value="C_TYPE_LECTIN_2"/>
    <property type="match status" value="1"/>
</dbReference>
<proteinExistence type="evidence at transcript level"/>
<comment type="function">
    <text evidence="1">Interferes with one step of hemostasis (modulation of platelet aggregation, or coagulation cascade, for example).</text>
</comment>
<comment type="subunit">
    <text evidence="1">Heterodimer; disulfide-linked.</text>
</comment>
<comment type="subcellular location">
    <subcellularLocation>
        <location evidence="1">Secreted</location>
    </subcellularLocation>
</comment>
<comment type="tissue specificity">
    <text>Expressed by the venom gland.</text>
</comment>
<comment type="miscellaneous">
    <text>Shows greater sequence similarity to the alpha than beta subunits compared to other heterodimer snaclecs.</text>
</comment>
<comment type="similarity">
    <text evidence="4">Belongs to the snaclec family.</text>
</comment>
<organism>
    <name type="scientific">Macrovipera lebetinus</name>
    <name type="common">Levantine viper</name>
    <name type="synonym">Vipera lebetina</name>
    <dbReference type="NCBI Taxonomy" id="3148341"/>
    <lineage>
        <taxon>Eukaryota</taxon>
        <taxon>Metazoa</taxon>
        <taxon>Chordata</taxon>
        <taxon>Craniata</taxon>
        <taxon>Vertebrata</taxon>
        <taxon>Euteleostomi</taxon>
        <taxon>Lepidosauria</taxon>
        <taxon>Squamata</taxon>
        <taxon>Bifurcata</taxon>
        <taxon>Unidentata</taxon>
        <taxon>Episquamata</taxon>
        <taxon>Toxicofera</taxon>
        <taxon>Serpentes</taxon>
        <taxon>Colubroidea</taxon>
        <taxon>Viperidae</taxon>
        <taxon>Viperinae</taxon>
        <taxon>Macrovipera</taxon>
    </lineage>
</organism>
<reference key="1">
    <citation type="journal article" date="2009" name="Toxicon">
        <title>C-type lectin protein isoforms of Macrovipera lebetina: cDNA cloning and genetic diversity.</title>
        <authorList>
            <person name="Jebali J."/>
            <person name="Bazaa A."/>
            <person name="Sarray S."/>
            <person name="Benhaj K."/>
            <person name="Karboul A."/>
            <person name="El Ayeb M."/>
            <person name="Marrakchi N."/>
            <person name="Gargouri A."/>
        </authorList>
    </citation>
    <scope>NUCLEOTIDE SEQUENCE [MRNA]</scope>
</reference>
<protein>
    <recommendedName>
        <fullName>Snaclec A15</fullName>
    </recommendedName>
    <alternativeName>
        <fullName>C-type lectin A15</fullName>
    </alternativeName>
</protein>
<accession>B4XSZ0</accession>
<feature type="signal peptide" evidence="1">
    <location>
        <begin position="1"/>
        <end position="23"/>
    </location>
</feature>
<feature type="chain" id="PRO_0000356331" description="Snaclec A15">
    <location>
        <begin position="24"/>
        <end position="156"/>
    </location>
</feature>
<feature type="domain" description="C-type lectin" evidence="3">
    <location>
        <begin position="34"/>
        <end position="153"/>
    </location>
</feature>
<feature type="glycosylation site" description="N-linked (GlcNAc...) asparagine" evidence="2">
    <location>
        <position position="141"/>
    </location>
</feature>
<feature type="disulfide bond" evidence="3">
    <location>
        <begin position="27"/>
        <end position="38"/>
    </location>
</feature>
<feature type="disulfide bond" evidence="3">
    <location>
        <begin position="55"/>
        <end position="152"/>
    </location>
</feature>
<feature type="disulfide bond" description="Interchain" evidence="3">
    <location>
        <position position="104"/>
    </location>
</feature>
<feature type="disulfide bond" evidence="3">
    <location>
        <begin position="127"/>
        <end position="144"/>
    </location>
</feature>
<evidence type="ECO:0000250" key="1"/>
<evidence type="ECO:0000255" key="2"/>
<evidence type="ECO:0000255" key="3">
    <source>
        <dbReference type="PROSITE-ProRule" id="PRU00040"/>
    </source>
</evidence>
<evidence type="ECO:0000305" key="4"/>
<sequence>MGRFIFVRFGLLVVFLSLSGTGADFDCPPDWSAYDQHCYKAFDEPKRSGDAEKFCTQQANGGHLVSIESVEEAEFVAQLISENIKTSADYVWIGLWNQRKAPYCVSKWTDGSSVIYKNVIERFIKNCFGLEKETNYRTWFNLSCGDDYPFVCKSPA</sequence>
<keyword id="KW-1015">Disulfide bond</keyword>
<keyword id="KW-0325">Glycoprotein</keyword>
<keyword id="KW-1199">Hemostasis impairing toxin</keyword>
<keyword id="KW-0964">Secreted</keyword>
<keyword id="KW-0732">Signal</keyword>
<keyword id="KW-0800">Toxin</keyword>
<name>SLAF_MACLB</name>